<reference key="1">
    <citation type="journal article" date="1999" name="Chem. Biol.">
        <title>Lovastatin biosynthesis in Aspergillus terreus: characterization of blocked mutants, enzyme activities and a multifunctional polyketide synthase gene.</title>
        <authorList>
            <person name="Hendrickson L."/>
            <person name="Davis C.R."/>
            <person name="Roach C."/>
            <person name="Nguyen D.K."/>
            <person name="Aldrich T."/>
            <person name="McAda P.C."/>
            <person name="Reeves C.D."/>
        </authorList>
    </citation>
    <scope>NUCLEOTIDE SEQUENCE [GENOMIC DNA]</scope>
    <scope>FUNCTION</scope>
    <scope>CATALYTIC ACTIVITY</scope>
    <scope>PATHWAY</scope>
    <source>
        <strain>ATCC 20542 / MF4845</strain>
        <tissue evidence="8">Mycelium</tissue>
    </source>
</reference>
<reference key="2">
    <citation type="journal article" date="1980" name="Proc. Natl. Acad. Sci. U.S.A.">
        <title>Mevinolin: a highly potent competitive inhibitor of hydroxymethylglutaryl-coenzyme A reductase and a cholesterol-lowering agent.</title>
        <authorList>
            <person name="Alberts A.W."/>
            <person name="Chen J."/>
            <person name="Kuron G."/>
            <person name="Hunt V."/>
            <person name="Huff J."/>
            <person name="Hoffman C."/>
            <person name="Rothrock J."/>
            <person name="Lopez M."/>
            <person name="Joshua H."/>
            <person name="Harris E."/>
            <person name="Patchett A."/>
            <person name="Monaghan R."/>
            <person name="Currie S."/>
            <person name="Stapley E."/>
            <person name="Albers-Schonberg G."/>
            <person name="Hensens O."/>
            <person name="Hirshfield J."/>
            <person name="Hoogsteen K."/>
            <person name="Liesch J."/>
            <person name="Springer J."/>
        </authorList>
    </citation>
    <scope>BIOTECHNOLOGY</scope>
</reference>
<reference key="3">
    <citation type="journal article" date="1999" name="Science">
        <title>Modulation of polyketide synthase activity by accessory proteins during lovastatin biosynthesis.</title>
        <authorList>
            <person name="Kennedy J."/>
            <person name="Auclair K."/>
            <person name="Kendrew S.G."/>
            <person name="Park C."/>
            <person name="Vederas J.C."/>
            <person name="Hutchinson C.R."/>
        </authorList>
    </citation>
    <scope>FUNCTION</scope>
    <scope>CATALYTIC ACTIVITY</scope>
    <scope>PATHWAY</scope>
</reference>
<reference key="4">
    <citation type="journal article" date="2003" name="Org. Biomol. Chem.">
        <title>Transformations of cyclic nonaketides by Aspergillus terreus mutants blocked for lovastatin biosynthesis at the lovA and lovC genes.</title>
        <authorList>
            <person name="Sorensen J.L."/>
            <person name="Auclair K."/>
            <person name="Kennedy J."/>
            <person name="Hutchinson C.R."/>
            <person name="Vederas J.C."/>
        </authorList>
    </citation>
    <scope>FUNCTION</scope>
</reference>
<reference key="5">
    <citation type="journal article" date="2006" name="Chem. Biol.">
        <title>Biosynthesis of lovastatin analogs with a broadly specific acyltransferase.</title>
        <authorList>
            <person name="Xie X."/>
            <person name="Watanabe K."/>
            <person name="Wojcicki W.A."/>
            <person name="Wang C.C."/>
            <person name="Tang Y."/>
        </authorList>
    </citation>
    <scope>FUNCTION</scope>
</reference>
<reference key="6">
    <citation type="journal article" date="2009" name="Biotechnol. Bioeng.">
        <title>Rational improvement of simvastatin synthase solubility in Escherichia coli leads to higher whole-cell biocatalytic activity.</title>
        <authorList>
            <person name="Xie X."/>
            <person name="Pashkov I."/>
            <person name="Gao X."/>
            <person name="Guerrero J.L."/>
            <person name="Yeates T.O."/>
            <person name="Tang Y."/>
        </authorList>
    </citation>
    <scope>FUNCTION</scope>
</reference>
<reference key="7">
    <citation type="journal article" date="2009" name="Chem. Biol.">
        <title>Directed evolution and structural characterization of a simvastatin synthase.</title>
        <authorList>
            <person name="Gao X."/>
            <person name="Xie X."/>
            <person name="Pashkov I."/>
            <person name="Sawaya M.R."/>
            <person name="Laidman J."/>
            <person name="Zhang W."/>
            <person name="Cacho R."/>
            <person name="Yeates T.O."/>
            <person name="Tang Y."/>
        </authorList>
    </citation>
    <scope>FUNCTION</scope>
</reference>
<reference key="8">
    <citation type="journal article" date="2009" name="J. Am. Chem. Soc.">
        <title>Acyltransferase mediated polyketide release from a fungal megasynthase.</title>
        <authorList>
            <person name="Xie X."/>
            <person name="Meehan M.J."/>
            <person name="Xu W."/>
            <person name="Dorrestein P.C."/>
            <person name="Tang Y."/>
        </authorList>
    </citation>
    <scope>FUNCTION</scope>
</reference>
<reference key="9">
    <citation type="journal article" date="2009" name="Science">
        <title>Complete reconstitution of a highly reducing iterative polyketide synthase.</title>
        <authorList>
            <person name="Ma S.M."/>
            <person name="Li J.W."/>
            <person name="Choi J.W."/>
            <person name="Zhou H."/>
            <person name="Lee K.K."/>
            <person name="Moorthie V.A."/>
            <person name="Xie X."/>
            <person name="Kealey J.T."/>
            <person name="Da Silva N.A."/>
            <person name="Vederas J.C."/>
            <person name="Tang Y."/>
        </authorList>
    </citation>
    <scope>FUNCTION</scope>
    <scope>PATHWAY</scope>
    <scope>COFACTOR</scope>
    <scope>IDENTIFICATION BY MASS SPECTROMETRY</scope>
</reference>
<reference key="10">
    <citation type="journal article" date="2011" name="Biochemistry">
        <title>FT-ICR-MS characterization of intermediates in the biosynthesis of the alpha-methylbutyrate side chain of lovastatin by the 277 kDa polyketide synthase LovF.</title>
        <authorList>
            <person name="Meehan M.J."/>
            <person name="Xie X."/>
            <person name="Zhao X."/>
            <person name="Xu W."/>
            <person name="Tang Y."/>
            <person name="Dorrestein P.C."/>
        </authorList>
    </citation>
    <scope>FUNCTION</scope>
</reference>
<reference key="11">
    <citation type="journal article" date="2011" name="J. Am. Chem. Soc.">
        <title>Double oxidation of the cyclic nonaketide dihydromonacolin L to monacolin J by a single cytochrome P450 monooxygenase, LovA.</title>
        <authorList>
            <person name="Barriuso J."/>
            <person name="Nguyen D.T."/>
            <person name="Li J.W."/>
            <person name="Roberts J.N."/>
            <person name="MacNevin G."/>
            <person name="Chaytor J.L."/>
            <person name="Marcus S.L."/>
            <person name="Vederas J.C."/>
            <person name="Ro D.K."/>
        </authorList>
    </citation>
    <scope>FUNCTION</scope>
    <scope>CATALYTIC ACTIVITY</scope>
    <scope>SUBCELLULAR LOCATION</scope>
    <scope>BIOPHYSICOCHEMICAL PROPERTIES</scope>
</reference>
<reference key="12">
    <citation type="journal article" date="2012" name="ChemBioChem">
        <title>Evolutionary imprint of catalytic domains in fungal PKS-NRPS hybrids.</title>
        <authorList>
            <person name="Boettger D."/>
            <person name="Bergmann H."/>
            <person name="Kuehn B."/>
            <person name="Shelest E."/>
            <person name="Hertweck C."/>
        </authorList>
    </citation>
    <scope>FUNCTION</scope>
    <scope>CATALYTIC ACTIVITY</scope>
    <scope>DOMAIN</scope>
</reference>
<reference key="13">
    <citation type="journal article" date="2012" name="Proc. Natl. Acad. Sci. U.S.A.">
        <title>Crystal structure and biochemical studies of the trans-acting polyketide enoyl reductase LovC from lovastatin biosynthesis.</title>
        <authorList>
            <person name="Ames B.D."/>
            <person name="Nguyen C."/>
            <person name="Bruegger J."/>
            <person name="Smith P."/>
            <person name="Xu W."/>
            <person name="Ma S."/>
            <person name="Wong E."/>
            <person name="Wong S."/>
            <person name="Xie X."/>
            <person name="Li J.W."/>
            <person name="Vederas J.C."/>
            <person name="Tang Y."/>
            <person name="Tsai S.C."/>
        </authorList>
    </citation>
    <scope>FUNCTION</scope>
    <scope>INTERACTION WITH LOVC</scope>
    <scope>DOMAIN</scope>
</reference>
<reference key="14">
    <citation type="journal article" date="2013" name="Angew. Chem. Int. Ed. Engl.">
        <title>LovG: the thioesterase required for dihydromonacolin L release and lovastatin nonaketide synthase turnover in lovastatin biosynthesis.</title>
        <authorList>
            <person name="Xu W."/>
            <person name="Chooi Y.H."/>
            <person name="Choi J.W."/>
            <person name="Li S."/>
            <person name="Vederas J.C."/>
            <person name="Da Silva N.A."/>
            <person name="Tang Y."/>
        </authorList>
    </citation>
    <scope>FUNCTION</scope>
    <scope>DOMAIN</scope>
</reference>
<reference key="15">
    <citation type="journal article" date="2014" name="Nat. Chem. Biol.">
        <title>The role of distant mutations and allosteric regulation on LovD active site dynamics.</title>
        <authorList>
            <person name="Jimenez-Oses G."/>
            <person name="Osuna S."/>
            <person name="Gao X."/>
            <person name="Sawaya M.R."/>
            <person name="Gilson L."/>
            <person name="Collier S.J."/>
            <person name="Huisman G.W."/>
            <person name="Yeates T.O."/>
            <person name="Tang Y."/>
            <person name="Houk K.N."/>
        </authorList>
    </citation>
    <scope>FUNCTION</scope>
</reference>
<reference key="16">
    <citation type="journal article" date="2017" name="Int. J. Mol. Sci.">
        <title>Simvastatin inhibits cell proliferation and migration in human anaplastic thyroid cancer.</title>
        <authorList>
            <person name="Chen M.C."/>
            <person name="Tsai Y.C."/>
            <person name="Tseng J.H."/>
            <person name="Liou J.J."/>
            <person name="Horng S."/>
            <person name="Wen H.C."/>
            <person name="Fan Y.C."/>
            <person name="Zhong W.B."/>
            <person name="Hsu S.P."/>
        </authorList>
    </citation>
    <scope>BIOTECHNOLOGY</scope>
</reference>
<reference key="17">
    <citation type="journal article" date="2018" name="Int. J. Mol. Sci.">
        <title>A synergistic anti-cancer effect of troglitazone and lovastatin in a human anaplastic thyroid cancer cell line and in a mouse xenograft model.</title>
        <authorList>
            <person name="Zhong W.B."/>
            <person name="Tsai Y.C."/>
            <person name="Chin L.H."/>
            <person name="Tseng J.H."/>
            <person name="Tang L.W."/>
            <person name="Horng S."/>
            <person name="Fan Y.C."/>
            <person name="Hsu S.P."/>
        </authorList>
    </citation>
    <scope>BIOTECHNOLOGY</scope>
</reference>
<reference key="18">
    <citation type="journal article" date="2025" name="Microbiol. Res.">
        <title>Development of a landing pad system for Aspergillus niger and its application in the overproduction of monacolin J.</title>
        <authorList>
            <person name="Yao L."/>
            <person name="Zheng J."/>
            <person name="Wang B."/>
            <person name="Pan L."/>
        </authorList>
    </citation>
    <scope>FUNCTION</scope>
    <scope>PATHWAY</scope>
</reference>
<reference key="19">
    <citation type="journal article" date="2021" name="Nat. Commun.">
        <title>Structural basis for the biosynthesis of lovastatin.</title>
        <authorList>
            <person name="Wang J."/>
            <person name="Liang J."/>
            <person name="Chen L."/>
            <person name="Zhang W."/>
            <person name="Kong L."/>
            <person name="Peng C."/>
            <person name="Su C."/>
            <person name="Tang Y."/>
            <person name="Deng Z."/>
            <person name="Wang Z."/>
        </authorList>
    </citation>
    <scope>STRUCTURE BY ELECTRON MICROSCOPY (2.91 ANGSTROMS) IN COMPLEX WITH LOVC</scope>
    <scope>FUNCTION</scope>
    <scope>CATALYTIC ACTIVITY</scope>
    <scope>SUBUNIT</scope>
    <scope>DOMAIN</scope>
    <scope>MUTAGENESIS OF GLU-747; ASP-748; GLU-749 AND SER-750</scope>
</reference>
<keyword id="KW-0002">3D-structure</keyword>
<keyword id="KW-0012">Acyltransferase</keyword>
<keyword id="KW-0489">Methyltransferase</keyword>
<keyword id="KW-0511">Multifunctional enzyme</keyword>
<keyword id="KW-0521">NADP</keyword>
<keyword id="KW-0560">Oxidoreductase</keyword>
<keyword id="KW-0596">Phosphopantetheine</keyword>
<keyword id="KW-0597">Phosphoprotein</keyword>
<keyword id="KW-0949">S-adenosyl-L-methionine</keyword>
<keyword id="KW-0808">Transferase</keyword>
<dbReference type="EC" id="2.3.1.161" evidence="7 8 23"/>
<dbReference type="EMBL" id="AF151722">
    <property type="protein sequence ID" value="AAD39830.1"/>
    <property type="molecule type" value="Genomic_DNA"/>
</dbReference>
<dbReference type="PDB" id="7CPX">
    <property type="method" value="EM"/>
    <property type="resolution" value="2.91 A"/>
    <property type="chains" value="A/B=1-3038"/>
</dbReference>
<dbReference type="PDB" id="7CPY">
    <property type="method" value="EM"/>
    <property type="resolution" value="3.60 A"/>
    <property type="chains" value="A/B=1-3038"/>
</dbReference>
<dbReference type="PDBsum" id="7CPX"/>
<dbReference type="PDBsum" id="7CPY"/>
<dbReference type="EMDB" id="EMD-30434"/>
<dbReference type="EMDB" id="EMD-30435"/>
<dbReference type="SMR" id="Q9Y8A5"/>
<dbReference type="DIP" id="DIP-60051N"/>
<dbReference type="IntAct" id="Q9Y8A5">
    <property type="interactions" value="1"/>
</dbReference>
<dbReference type="KEGG" id="ag:AAD39830"/>
<dbReference type="VEuPathDB" id="FungiDB:ATEG_09961"/>
<dbReference type="BioCyc" id="MetaCyc:MONOMER-18782"/>
<dbReference type="BRENDA" id="2.3.1.161">
    <property type="organism ID" value="536"/>
</dbReference>
<dbReference type="UniPathway" id="UPA00875"/>
<dbReference type="GO" id="GO:0004315">
    <property type="term" value="F:3-oxoacyl-[acyl-carrier-protein] synthase activity"/>
    <property type="evidence" value="ECO:0007669"/>
    <property type="project" value="InterPro"/>
</dbReference>
<dbReference type="GO" id="GO:0016747">
    <property type="term" value="F:acyltransferase activity, transferring groups other than amino-acyl groups"/>
    <property type="evidence" value="ECO:0000314"/>
    <property type="project" value="UniProtKB"/>
</dbReference>
<dbReference type="GO" id="GO:0005524">
    <property type="term" value="F:ATP binding"/>
    <property type="evidence" value="ECO:0000303"/>
    <property type="project" value="UniProtKB"/>
</dbReference>
<dbReference type="GO" id="GO:0004312">
    <property type="term" value="F:fatty acid synthase activity"/>
    <property type="evidence" value="ECO:0007669"/>
    <property type="project" value="TreeGrafter"/>
</dbReference>
<dbReference type="GO" id="GO:0050637">
    <property type="term" value="F:lovastatin nonaketide synthase activity"/>
    <property type="evidence" value="ECO:0000314"/>
    <property type="project" value="UniProtKB"/>
</dbReference>
<dbReference type="GO" id="GO:0016491">
    <property type="term" value="F:oxidoreductase activity"/>
    <property type="evidence" value="ECO:0000314"/>
    <property type="project" value="UniProtKB"/>
</dbReference>
<dbReference type="GO" id="GO:0031177">
    <property type="term" value="F:phosphopantetheine binding"/>
    <property type="evidence" value="ECO:0007669"/>
    <property type="project" value="InterPro"/>
</dbReference>
<dbReference type="GO" id="GO:0016218">
    <property type="term" value="F:polyketide synthase activity"/>
    <property type="evidence" value="ECO:0000314"/>
    <property type="project" value="UniProt"/>
</dbReference>
<dbReference type="GO" id="GO:0008757">
    <property type="term" value="F:S-adenosylmethionine-dependent methyltransferase activity"/>
    <property type="evidence" value="ECO:0000314"/>
    <property type="project" value="UniProtKB"/>
</dbReference>
<dbReference type="GO" id="GO:0006633">
    <property type="term" value="P:fatty acid biosynthetic process"/>
    <property type="evidence" value="ECO:0007669"/>
    <property type="project" value="InterPro"/>
</dbReference>
<dbReference type="GO" id="GO:0140735">
    <property type="term" value="P:lovastatin biosynthetic process"/>
    <property type="evidence" value="ECO:0000314"/>
    <property type="project" value="GO_Central"/>
</dbReference>
<dbReference type="GO" id="GO:0032259">
    <property type="term" value="P:methylation"/>
    <property type="evidence" value="ECO:0007669"/>
    <property type="project" value="UniProtKB-KW"/>
</dbReference>
<dbReference type="GO" id="GO:0030639">
    <property type="term" value="P:polyketide biosynthetic process"/>
    <property type="evidence" value="ECO:0000314"/>
    <property type="project" value="UniProtKB"/>
</dbReference>
<dbReference type="GO" id="GO:0046500">
    <property type="term" value="P:S-adenosylmethionine metabolic process"/>
    <property type="evidence" value="ECO:0000314"/>
    <property type="project" value="UniProtKB"/>
</dbReference>
<dbReference type="CDD" id="cd02440">
    <property type="entry name" value="AdoMet_MTases"/>
    <property type="match status" value="1"/>
</dbReference>
<dbReference type="CDD" id="cd19532">
    <property type="entry name" value="C_PKS-NRPS"/>
    <property type="match status" value="1"/>
</dbReference>
<dbReference type="CDD" id="cd00833">
    <property type="entry name" value="PKS"/>
    <property type="match status" value="1"/>
</dbReference>
<dbReference type="FunFam" id="3.40.47.10:FF:000019">
    <property type="entry name" value="Polyketide synthase type I"/>
    <property type="match status" value="1"/>
</dbReference>
<dbReference type="Gene3D" id="3.30.70.3290">
    <property type="match status" value="1"/>
</dbReference>
<dbReference type="Gene3D" id="3.40.47.10">
    <property type="match status" value="1"/>
</dbReference>
<dbReference type="Gene3D" id="3.30.559.10">
    <property type="entry name" value="Chloramphenicol acetyltransferase-like domain"/>
    <property type="match status" value="1"/>
</dbReference>
<dbReference type="Gene3D" id="3.40.366.10">
    <property type="entry name" value="Malonyl-Coenzyme A Acyl Carrier Protein, domain 2"/>
    <property type="match status" value="1"/>
</dbReference>
<dbReference type="Gene3D" id="3.40.50.720">
    <property type="entry name" value="NAD(P)-binding Rossmann-like Domain"/>
    <property type="match status" value="2"/>
</dbReference>
<dbReference type="Gene3D" id="3.30.559.30">
    <property type="entry name" value="Nonribosomal peptide synthetase, condensation domain"/>
    <property type="match status" value="1"/>
</dbReference>
<dbReference type="Gene3D" id="3.10.129.110">
    <property type="entry name" value="Polyketide synthase dehydratase"/>
    <property type="match status" value="1"/>
</dbReference>
<dbReference type="Gene3D" id="3.40.50.150">
    <property type="entry name" value="Vaccinia Virus protein VP39"/>
    <property type="match status" value="1"/>
</dbReference>
<dbReference type="InterPro" id="IPR001227">
    <property type="entry name" value="Ac_transferase_dom_sf"/>
</dbReference>
<dbReference type="InterPro" id="IPR036736">
    <property type="entry name" value="ACP-like_sf"/>
</dbReference>
<dbReference type="InterPro" id="IPR014043">
    <property type="entry name" value="Acyl_transferase_dom"/>
</dbReference>
<dbReference type="InterPro" id="IPR016035">
    <property type="entry name" value="Acyl_Trfase/lysoPLipase"/>
</dbReference>
<dbReference type="InterPro" id="IPR023213">
    <property type="entry name" value="CAT-like_dom_sf"/>
</dbReference>
<dbReference type="InterPro" id="IPR001242">
    <property type="entry name" value="Condensatn"/>
</dbReference>
<dbReference type="InterPro" id="IPR018201">
    <property type="entry name" value="Ketoacyl_synth_AS"/>
</dbReference>
<dbReference type="InterPro" id="IPR014031">
    <property type="entry name" value="Ketoacyl_synth_C"/>
</dbReference>
<dbReference type="InterPro" id="IPR014030">
    <property type="entry name" value="Ketoacyl_synth_N"/>
</dbReference>
<dbReference type="InterPro" id="IPR016036">
    <property type="entry name" value="Malonyl_transacylase_ACP-bd"/>
</dbReference>
<dbReference type="InterPro" id="IPR013217">
    <property type="entry name" value="Methyltransf_12"/>
</dbReference>
<dbReference type="InterPro" id="IPR036291">
    <property type="entry name" value="NAD(P)-bd_dom_sf"/>
</dbReference>
<dbReference type="InterPro" id="IPR032821">
    <property type="entry name" value="PKS_assoc"/>
</dbReference>
<dbReference type="InterPro" id="IPR020841">
    <property type="entry name" value="PKS_Beta-ketoAc_synthase_dom"/>
</dbReference>
<dbReference type="InterPro" id="IPR042104">
    <property type="entry name" value="PKS_dehydratase_sf"/>
</dbReference>
<dbReference type="InterPro" id="IPR020807">
    <property type="entry name" value="PKS_DH"/>
</dbReference>
<dbReference type="InterPro" id="IPR049551">
    <property type="entry name" value="PKS_DH_C"/>
</dbReference>
<dbReference type="InterPro" id="IPR049552">
    <property type="entry name" value="PKS_DH_N"/>
</dbReference>
<dbReference type="InterPro" id="IPR013968">
    <property type="entry name" value="PKS_KR"/>
</dbReference>
<dbReference type="InterPro" id="IPR049900">
    <property type="entry name" value="PKS_mFAS_DH"/>
</dbReference>
<dbReference type="InterPro" id="IPR050091">
    <property type="entry name" value="PKS_NRPS_Biosynth_Enz"/>
</dbReference>
<dbReference type="InterPro" id="IPR020806">
    <property type="entry name" value="PKS_PP-bd"/>
</dbReference>
<dbReference type="InterPro" id="IPR009081">
    <property type="entry name" value="PP-bd_ACP"/>
</dbReference>
<dbReference type="InterPro" id="IPR029063">
    <property type="entry name" value="SAM-dependent_MTases_sf"/>
</dbReference>
<dbReference type="InterPro" id="IPR016039">
    <property type="entry name" value="Thiolase-like"/>
</dbReference>
<dbReference type="PANTHER" id="PTHR43775">
    <property type="entry name" value="FATTY ACID SYNTHASE"/>
    <property type="match status" value="1"/>
</dbReference>
<dbReference type="PANTHER" id="PTHR43775:SF20">
    <property type="entry name" value="HYBRID PKS-NRPS SYNTHETASE APDA"/>
    <property type="match status" value="1"/>
</dbReference>
<dbReference type="Pfam" id="PF00698">
    <property type="entry name" value="Acyl_transf_1"/>
    <property type="match status" value="1"/>
</dbReference>
<dbReference type="Pfam" id="PF00668">
    <property type="entry name" value="Condensation"/>
    <property type="match status" value="1"/>
</dbReference>
<dbReference type="Pfam" id="PF16197">
    <property type="entry name" value="KAsynt_C_assoc"/>
    <property type="match status" value="1"/>
</dbReference>
<dbReference type="Pfam" id="PF00109">
    <property type="entry name" value="ketoacyl-synt"/>
    <property type="match status" value="1"/>
</dbReference>
<dbReference type="Pfam" id="PF02801">
    <property type="entry name" value="Ketoacyl-synt_C"/>
    <property type="match status" value="1"/>
</dbReference>
<dbReference type="Pfam" id="PF08659">
    <property type="entry name" value="KR"/>
    <property type="match status" value="1"/>
</dbReference>
<dbReference type="Pfam" id="PF08242">
    <property type="entry name" value="Methyltransf_12"/>
    <property type="match status" value="1"/>
</dbReference>
<dbReference type="Pfam" id="PF21089">
    <property type="entry name" value="PKS_DH_N"/>
    <property type="match status" value="1"/>
</dbReference>
<dbReference type="Pfam" id="PF00550">
    <property type="entry name" value="PP-binding"/>
    <property type="match status" value="1"/>
</dbReference>
<dbReference type="Pfam" id="PF14765">
    <property type="entry name" value="PS-DH"/>
    <property type="match status" value="1"/>
</dbReference>
<dbReference type="SMART" id="SM00827">
    <property type="entry name" value="PKS_AT"/>
    <property type="match status" value="1"/>
</dbReference>
<dbReference type="SMART" id="SM00826">
    <property type="entry name" value="PKS_DH"/>
    <property type="match status" value="1"/>
</dbReference>
<dbReference type="SMART" id="SM00822">
    <property type="entry name" value="PKS_KR"/>
    <property type="match status" value="1"/>
</dbReference>
<dbReference type="SMART" id="SM00825">
    <property type="entry name" value="PKS_KS"/>
    <property type="match status" value="1"/>
</dbReference>
<dbReference type="SMART" id="SM00823">
    <property type="entry name" value="PKS_PP"/>
    <property type="match status" value="1"/>
</dbReference>
<dbReference type="SUPFAM" id="SSF47336">
    <property type="entry name" value="ACP-like"/>
    <property type="match status" value="1"/>
</dbReference>
<dbReference type="SUPFAM" id="SSF52777">
    <property type="entry name" value="CoA-dependent acyltransferases"/>
    <property type="match status" value="2"/>
</dbReference>
<dbReference type="SUPFAM" id="SSF52151">
    <property type="entry name" value="FabD/lysophospholipase-like"/>
    <property type="match status" value="1"/>
</dbReference>
<dbReference type="SUPFAM" id="SSF51735">
    <property type="entry name" value="NAD(P)-binding Rossmann-fold domains"/>
    <property type="match status" value="2"/>
</dbReference>
<dbReference type="SUPFAM" id="SSF55048">
    <property type="entry name" value="Probable ACP-binding domain of malonyl-CoA ACP transacylase"/>
    <property type="match status" value="1"/>
</dbReference>
<dbReference type="SUPFAM" id="SSF53335">
    <property type="entry name" value="S-adenosyl-L-methionine-dependent methyltransferases"/>
    <property type="match status" value="1"/>
</dbReference>
<dbReference type="SUPFAM" id="SSF53901">
    <property type="entry name" value="Thiolase-like"/>
    <property type="match status" value="1"/>
</dbReference>
<dbReference type="PROSITE" id="PS50075">
    <property type="entry name" value="CARRIER"/>
    <property type="match status" value="1"/>
</dbReference>
<dbReference type="PROSITE" id="PS00606">
    <property type="entry name" value="KS3_1"/>
    <property type="match status" value="1"/>
</dbReference>
<dbReference type="PROSITE" id="PS52004">
    <property type="entry name" value="KS3_2"/>
    <property type="match status" value="1"/>
</dbReference>
<dbReference type="PROSITE" id="PS52019">
    <property type="entry name" value="PKS_MFAS_DH"/>
    <property type="match status" value="1"/>
</dbReference>
<organism>
    <name type="scientific">Aspergillus terreus</name>
    <dbReference type="NCBI Taxonomy" id="33178"/>
    <lineage>
        <taxon>Eukaryota</taxon>
        <taxon>Fungi</taxon>
        <taxon>Dikarya</taxon>
        <taxon>Ascomycota</taxon>
        <taxon>Pezizomycotina</taxon>
        <taxon>Eurotiomycetes</taxon>
        <taxon>Eurotiomycetidae</taxon>
        <taxon>Eurotiales</taxon>
        <taxon>Aspergillaceae</taxon>
        <taxon>Aspergillus</taxon>
        <taxon>Aspergillus subgen. Circumdati</taxon>
    </lineage>
</organism>
<proteinExistence type="evidence at protein level"/>
<feature type="chain" id="PRO_0000180288" description="Lovastatin nonaketide synthase, polyketide synthase component">
    <location>
        <begin position="1"/>
        <end position="3038"/>
    </location>
</feature>
<feature type="domain" description="Ketosynthase family 3 (KS3)" evidence="3 23 27">
    <location>
        <begin position="8"/>
        <end position="447"/>
    </location>
</feature>
<feature type="domain" description="PKS/mFAS DH" evidence="4 23">
    <location>
        <begin position="953"/>
        <end position="1267"/>
    </location>
</feature>
<feature type="domain" description="Carrier" evidence="2 23 27">
    <location>
        <begin position="2463"/>
        <end position="2538"/>
    </location>
</feature>
<feature type="region of interest" description="Malonyl-CoA:ACP transacylase (MAT) domain" evidence="1 23 27">
    <location>
        <begin position="562"/>
        <end position="889"/>
    </location>
</feature>
<feature type="region of interest" description="LovC-binding" evidence="23">
    <location>
        <begin position="695"/>
        <end position="757"/>
    </location>
</feature>
<feature type="region of interest" description="Dehydratase (DH) domain" evidence="1 23 27">
    <location>
        <begin position="953"/>
        <end position="1263"/>
    </location>
</feature>
<feature type="region of interest" description="N-terminal hotdog fold" evidence="4">
    <location>
        <begin position="953"/>
        <end position="1089"/>
    </location>
</feature>
<feature type="region of interest" description="C-terminal hotdog fold" evidence="4">
    <location>
        <begin position="1107"/>
        <end position="1267"/>
    </location>
</feature>
<feature type="region of interest" description="Methyltransferase (CMet) domain" evidence="1 23 27">
    <location>
        <begin position="1443"/>
        <end position="1543"/>
    </location>
</feature>
<feature type="region of interest" description="Ketoreductase (KR) domain" evidence="1 23 27">
    <location>
        <begin position="2139"/>
        <end position="2437"/>
    </location>
</feature>
<feature type="region of interest" description="Disordered" evidence="6">
    <location>
        <begin position="2546"/>
        <end position="2602"/>
    </location>
</feature>
<feature type="region of interest" description="Inactive Condensation domain" evidence="18">
    <location>
        <begin position="2602"/>
        <end position="2952"/>
    </location>
</feature>
<feature type="compositionally biased region" description="Acidic residues" evidence="6">
    <location>
        <begin position="2583"/>
        <end position="2594"/>
    </location>
</feature>
<feature type="active site" description="For beta-ketoacyl synthase activity" evidence="3">
    <location>
        <position position="181"/>
    </location>
</feature>
<feature type="active site" description="For beta-ketoacyl synthase activity" evidence="3">
    <location>
        <position position="320"/>
    </location>
</feature>
<feature type="active site" description="For beta-ketoacyl synthase activity" evidence="3">
    <location>
        <position position="367"/>
    </location>
</feature>
<feature type="active site" description="For malonyltransferase activity" evidence="5">
    <location>
        <position position="656"/>
    </location>
</feature>
<feature type="active site" description="Proton acceptor; for dehydratase activity" evidence="4">
    <location>
        <position position="985"/>
    </location>
</feature>
<feature type="active site" description="Proton donor; for dehydratase activity" evidence="4">
    <location>
        <position position="1174"/>
    </location>
</feature>
<feature type="modified residue" description="O-(pantetheine 4'-phosphoryl)serine" evidence="2">
    <location>
        <position position="2498"/>
    </location>
</feature>
<feature type="mutagenesis site" description="Impairs the binding to lovC; when associated with A-748, A-749 and A-750." evidence="23">
    <original>E</original>
    <variation>A</variation>
    <location>
        <position position="747"/>
    </location>
</feature>
<feature type="mutagenesis site" description="Impairs the binding to lovC; when associated with A-747, A-749 and A-750." evidence="23">
    <original>D</original>
    <variation>A</variation>
    <location>
        <position position="748"/>
    </location>
</feature>
<feature type="mutagenesis site" description="Impairs the binding to lovC; when associated with A-747, A-748 and A-750." evidence="23">
    <original>E</original>
    <variation>A</variation>
    <location>
        <position position="749"/>
    </location>
</feature>
<feature type="mutagenesis site" description="Impairs the binding to lovC; when associated with A-747, A-748 and A-749." evidence="23">
    <original>S</original>
    <variation>A</variation>
    <location>
        <position position="750"/>
    </location>
</feature>
<feature type="strand" evidence="29">
    <location>
        <begin position="6"/>
        <end position="8"/>
    </location>
</feature>
<feature type="strand" evidence="29">
    <location>
        <begin position="11"/>
        <end position="20"/>
    </location>
</feature>
<feature type="turn" evidence="29">
    <location>
        <begin position="21"/>
        <end position="23"/>
    </location>
</feature>
<feature type="helix" evidence="29">
    <location>
        <begin position="27"/>
        <end position="35"/>
    </location>
</feature>
<feature type="turn" evidence="29">
    <location>
        <begin position="46"/>
        <end position="48"/>
    </location>
</feature>
<feature type="helix" evidence="29">
    <location>
        <begin position="51"/>
        <end position="53"/>
    </location>
</feature>
<feature type="strand" evidence="29">
    <location>
        <begin position="69"/>
        <end position="71"/>
    </location>
</feature>
<feature type="turn" evidence="29">
    <location>
        <begin position="82"/>
        <end position="86"/>
    </location>
</feature>
<feature type="helix" evidence="29">
    <location>
        <begin position="89"/>
        <end position="94"/>
    </location>
</feature>
<feature type="helix" evidence="29">
    <location>
        <begin position="97"/>
        <end position="113"/>
    </location>
</feature>
<feature type="helix" evidence="29">
    <location>
        <begin position="117"/>
        <end position="120"/>
    </location>
</feature>
<feature type="strand" evidence="29">
    <location>
        <begin position="126"/>
        <end position="131"/>
    </location>
</feature>
<feature type="turn" evidence="29">
    <location>
        <begin position="136"/>
        <end position="141"/>
    </location>
</feature>
<feature type="strand" evidence="29">
    <location>
        <begin position="142"/>
        <end position="144"/>
    </location>
</feature>
<feature type="helix" evidence="29">
    <location>
        <begin position="151"/>
        <end position="155"/>
    </location>
</feature>
<feature type="helix" evidence="29">
    <location>
        <begin position="159"/>
        <end position="168"/>
    </location>
</feature>
<feature type="strand" evidence="29">
    <location>
        <begin position="174"/>
        <end position="177"/>
    </location>
</feature>
<feature type="helix" evidence="29">
    <location>
        <begin position="180"/>
        <end position="182"/>
    </location>
</feature>
<feature type="helix" evidence="29">
    <location>
        <begin position="183"/>
        <end position="196"/>
    </location>
</feature>
<feature type="strand" evidence="29">
    <location>
        <begin position="203"/>
        <end position="209"/>
    </location>
</feature>
<feature type="helix" evidence="29">
    <location>
        <begin position="214"/>
        <end position="222"/>
    </location>
</feature>
<feature type="strand" evidence="29">
    <location>
        <begin position="247"/>
        <end position="255"/>
    </location>
</feature>
<feature type="helix" evidence="29">
    <location>
        <begin position="256"/>
        <end position="261"/>
    </location>
</feature>
<feature type="strand" evidence="29">
    <location>
        <begin position="267"/>
        <end position="277"/>
    </location>
</feature>
<feature type="strand" evidence="29">
    <location>
        <begin position="282"/>
        <end position="285"/>
    </location>
</feature>
<feature type="helix" evidence="29">
    <location>
        <begin position="289"/>
        <end position="302"/>
    </location>
</feature>
<feature type="turn" evidence="29">
    <location>
        <begin position="310"/>
        <end position="312"/>
    </location>
</feature>
<feature type="strand" evidence="29">
    <location>
        <begin position="315"/>
        <end position="318"/>
    </location>
</feature>
<feature type="helix" evidence="29">
    <location>
        <begin position="327"/>
        <end position="339"/>
    </location>
</feature>
<feature type="strand" evidence="29">
    <location>
        <begin position="356"/>
        <end position="358"/>
    </location>
</feature>
<feature type="helix" evidence="29">
    <location>
        <begin position="361"/>
        <end position="363"/>
    </location>
</feature>
<feature type="helix" evidence="29">
    <location>
        <begin position="369"/>
        <end position="386"/>
    </location>
</feature>
<feature type="strand" evidence="29">
    <location>
        <begin position="396"/>
        <end position="398"/>
    </location>
</feature>
<feature type="turn" evidence="29">
    <location>
        <begin position="400"/>
        <end position="402"/>
    </location>
</feature>
<feature type="helix" evidence="29">
    <location>
        <begin position="403"/>
        <end position="405"/>
    </location>
</feature>
<feature type="strand" evidence="29">
    <location>
        <begin position="428"/>
        <end position="435"/>
    </location>
</feature>
<feature type="turn" evidence="29">
    <location>
        <begin position="436"/>
        <end position="438"/>
    </location>
</feature>
<feature type="strand" evidence="29">
    <location>
        <begin position="439"/>
        <end position="446"/>
    </location>
</feature>
<feature type="strand" evidence="29">
    <location>
        <begin position="475"/>
        <end position="481"/>
    </location>
</feature>
<feature type="helix" evidence="29">
    <location>
        <begin position="482"/>
        <end position="498"/>
    </location>
</feature>
<feature type="helix" evidence="29">
    <location>
        <begin position="504"/>
        <end position="513"/>
    </location>
</feature>
<feature type="strand" evidence="29">
    <location>
        <begin position="519"/>
        <end position="524"/>
    </location>
</feature>
<feature type="helix" evidence="29">
    <location>
        <begin position="529"/>
        <end position="542"/>
    </location>
</feature>
<feature type="strand" evidence="29">
    <location>
        <begin position="558"/>
        <end position="563"/>
    </location>
</feature>
<feature type="turn" evidence="29">
    <location>
        <begin position="571"/>
        <end position="574"/>
    </location>
</feature>
<feature type="helix" evidence="29">
    <location>
        <begin position="575"/>
        <end position="578"/>
    </location>
</feature>
<feature type="helix" evidence="29">
    <location>
        <begin position="582"/>
        <end position="596"/>
    </location>
</feature>
<feature type="turn" evidence="29">
    <location>
        <begin position="600"/>
        <end position="602"/>
    </location>
</feature>
<feature type="turn" evidence="29">
    <location>
        <begin position="608"/>
        <end position="612"/>
    </location>
</feature>
<feature type="turn" evidence="29">
    <location>
        <begin position="615"/>
        <end position="617"/>
    </location>
</feature>
<feature type="helix" evidence="29">
    <location>
        <begin position="624"/>
        <end position="644"/>
    </location>
</feature>
<feature type="strand" evidence="29">
    <location>
        <begin position="648"/>
        <end position="652"/>
    </location>
</feature>
<feature type="helix" evidence="29">
    <location>
        <begin position="657"/>
        <end position="665"/>
    </location>
</feature>
<feature type="helix" evidence="29">
    <location>
        <begin position="671"/>
        <end position="682"/>
    </location>
</feature>
<feature type="helix" evidence="29">
    <location>
        <begin position="765"/>
        <end position="767"/>
    </location>
</feature>
<feature type="helix" evidence="29">
    <location>
        <begin position="768"/>
        <end position="780"/>
    </location>
</feature>
<feature type="strand" evidence="29">
    <location>
        <begin position="800"/>
        <end position="804"/>
    </location>
</feature>
<feature type="turn" evidence="29">
    <location>
        <begin position="809"/>
        <end position="812"/>
    </location>
</feature>
<feature type="helix" evidence="29">
    <location>
        <begin position="815"/>
        <end position="820"/>
    </location>
</feature>
<feature type="helix" evidence="29">
    <location>
        <begin position="828"/>
        <end position="838"/>
    </location>
</feature>
<feature type="turn" evidence="29">
    <location>
        <begin position="839"/>
        <end position="841"/>
    </location>
</feature>
<feature type="strand" evidence="29">
    <location>
        <begin position="844"/>
        <end position="850"/>
    </location>
</feature>
<feature type="helix" evidence="29">
    <location>
        <begin position="855"/>
        <end position="865"/>
    </location>
</feature>
<feature type="turn" evidence="29">
    <location>
        <begin position="866"/>
        <end position="868"/>
    </location>
</feature>
<feature type="strand" evidence="29">
    <location>
        <begin position="872"/>
        <end position="877"/>
    </location>
</feature>
<feature type="strand" evidence="29">
    <location>
        <begin position="879"/>
        <end position="881"/>
    </location>
</feature>
<feature type="helix" evidence="29">
    <location>
        <begin position="883"/>
        <end position="898"/>
    </location>
</feature>
<feature type="helix" evidence="29">
    <location>
        <begin position="900"/>
        <end position="902"/>
    </location>
</feature>
<feature type="helix" evidence="29">
    <location>
        <begin position="905"/>
        <end position="911"/>
    </location>
</feature>
<feature type="helix" evidence="29">
    <location>
        <begin position="921"/>
        <end position="923"/>
    </location>
</feature>
<feature type="helix" evidence="29">
    <location>
        <begin position="941"/>
        <end position="947"/>
    </location>
</feature>
<feature type="strand" evidence="29">
    <location>
        <begin position="948"/>
        <end position="950"/>
    </location>
</feature>
<feature type="turn" evidence="29">
    <location>
        <begin position="954"/>
        <end position="956"/>
    </location>
</feature>
<feature type="strand" evidence="29">
    <location>
        <begin position="957"/>
        <end position="959"/>
    </location>
</feature>
<feature type="strand" evidence="29">
    <location>
        <begin position="965"/>
        <end position="974"/>
    </location>
</feature>
<feature type="helix" evidence="29">
    <location>
        <begin position="976"/>
        <end position="978"/>
    </location>
</feature>
<feature type="helix" evidence="29">
    <location>
        <begin position="980"/>
        <end position="984"/>
    </location>
</feature>
<feature type="strand" evidence="29">
    <location>
        <begin position="990"/>
        <end position="992"/>
    </location>
</feature>
<feature type="helix" evidence="29">
    <location>
        <begin position="995"/>
        <end position="1012"/>
    </location>
</feature>
<feature type="strand" evidence="29">
    <location>
        <begin position="1016"/>
        <end position="1027"/>
    </location>
</feature>
<feature type="strand" evidence="29">
    <location>
        <begin position="1032"/>
        <end position="1035"/>
    </location>
</feature>
<feature type="strand" evidence="29">
    <location>
        <begin position="1040"/>
        <end position="1052"/>
    </location>
</feature>
<feature type="turn" evidence="29">
    <location>
        <begin position="1053"/>
        <end position="1056"/>
    </location>
</feature>
<feature type="strand" evidence="29">
    <location>
        <begin position="1057"/>
        <end position="1069"/>
    </location>
</feature>
<feature type="strand" evidence="29">
    <location>
        <begin position="1075"/>
        <end position="1087"/>
    </location>
</feature>
<feature type="strand" evidence="29">
    <location>
        <begin position="1113"/>
        <end position="1115"/>
    </location>
</feature>
<feature type="helix" evidence="29">
    <location>
        <begin position="1117"/>
        <end position="1126"/>
    </location>
</feature>
<feature type="helix" evidence="29">
    <location>
        <begin position="1133"/>
        <end position="1136"/>
    </location>
</feature>
<feature type="strand" evidence="29">
    <location>
        <begin position="1140"/>
        <end position="1144"/>
    </location>
</feature>
<feature type="strand" evidence="29">
    <location>
        <begin position="1147"/>
        <end position="1152"/>
    </location>
</feature>
<feature type="turn" evidence="29">
    <location>
        <begin position="1160"/>
        <end position="1162"/>
    </location>
</feature>
<feature type="helix" evidence="29">
    <location>
        <begin position="1170"/>
        <end position="1184"/>
    </location>
</feature>
<feature type="turn" evidence="29">
    <location>
        <begin position="1187"/>
        <end position="1189"/>
    </location>
</feature>
<feature type="strand" evidence="29">
    <location>
        <begin position="1196"/>
        <end position="1206"/>
    </location>
</feature>
<feature type="helix" evidence="29">
    <location>
        <begin position="1208"/>
        <end position="1217"/>
    </location>
</feature>
<feature type="strand" evidence="29">
    <location>
        <begin position="1222"/>
        <end position="1230"/>
    </location>
</feature>
<feature type="strand" evidence="29">
    <location>
        <begin position="1232"/>
        <end position="1243"/>
    </location>
</feature>
<feature type="strand" evidence="29">
    <location>
        <begin position="1249"/>
        <end position="1262"/>
    </location>
</feature>
<feature type="helix" evidence="29">
    <location>
        <begin position="1266"/>
        <end position="1268"/>
    </location>
</feature>
<feature type="strand" evidence="29">
    <location>
        <begin position="1274"/>
        <end position="1282"/>
    </location>
</feature>
<feature type="strand" evidence="29">
    <location>
        <begin position="1285"/>
        <end position="1287"/>
    </location>
</feature>
<feature type="helix" evidence="29">
    <location>
        <begin position="1290"/>
        <end position="1292"/>
    </location>
</feature>
<feature type="helix" evidence="29">
    <location>
        <begin position="1298"/>
        <end position="1309"/>
    </location>
</feature>
<feature type="helix" evidence="29">
    <location>
        <begin position="1313"/>
        <end position="1324"/>
    </location>
</feature>
<feature type="turn" evidence="29">
    <location>
        <begin position="1325"/>
        <end position="1329"/>
    </location>
</feature>
<feature type="helix" evidence="29">
    <location>
        <begin position="1330"/>
        <end position="1333"/>
    </location>
</feature>
<feature type="helix" evidence="29">
    <location>
        <begin position="1339"/>
        <end position="1354"/>
    </location>
</feature>
<feature type="turn" evidence="29">
    <location>
        <begin position="1355"/>
        <end position="1360"/>
    </location>
</feature>
<feature type="helix" evidence="29">
    <location>
        <begin position="1361"/>
        <end position="1370"/>
    </location>
</feature>
<feature type="strand" evidence="29">
    <location>
        <begin position="1372"/>
        <end position="1375"/>
    </location>
</feature>
<feature type="helix" evidence="29">
    <location>
        <begin position="1376"/>
        <end position="1386"/>
    </location>
</feature>
<feature type="helix" evidence="29">
    <location>
        <begin position="1389"/>
        <end position="1393"/>
    </location>
</feature>
<feature type="turn" evidence="29">
    <location>
        <begin position="1399"/>
        <end position="1402"/>
    </location>
</feature>
<feature type="helix" evidence="29">
    <location>
        <begin position="1409"/>
        <end position="1415"/>
    </location>
</feature>
<feature type="turn" evidence="29">
    <location>
        <begin position="1417"/>
        <end position="1419"/>
    </location>
</feature>
<feature type="helix" evidence="29">
    <location>
        <begin position="1420"/>
        <end position="1436"/>
    </location>
</feature>
<feature type="strand" evidence="29">
    <location>
        <begin position="1439"/>
        <end position="1445"/>
    </location>
</feature>
<feature type="helix" evidence="29">
    <location>
        <begin position="1451"/>
        <end position="1457"/>
    </location>
</feature>
<feature type="strand" evidence="29">
    <location>
        <begin position="1464"/>
        <end position="1469"/>
    </location>
</feature>
<feature type="helix" evidence="29">
    <location>
        <begin position="1474"/>
        <end position="1476"/>
    </location>
</feature>
<feature type="helix" evidence="29">
    <location>
        <begin position="1477"/>
        <end position="1483"/>
    </location>
</feature>
<feature type="turn" evidence="29">
    <location>
        <begin position="1486"/>
        <end position="1490"/>
    </location>
</feature>
<feature type="strand" evidence="29">
    <location>
        <begin position="1491"/>
        <end position="1493"/>
    </location>
</feature>
<feature type="helix" evidence="29">
    <location>
        <begin position="1503"/>
        <end position="1505"/>
    </location>
</feature>
<feature type="strand" evidence="29">
    <location>
        <begin position="1512"/>
        <end position="1519"/>
    </location>
</feature>
<feature type="helix" evidence="29">
    <location>
        <begin position="1521"/>
        <end position="1523"/>
    </location>
</feature>
<feature type="helix" evidence="29">
    <location>
        <begin position="1527"/>
        <end position="1537"/>
    </location>
</feature>
<feature type="strand" evidence="29">
    <location>
        <begin position="1538"/>
        <end position="1547"/>
    </location>
</feature>
<feature type="helix" evidence="29">
    <location>
        <begin position="1554"/>
        <end position="1561"/>
    </location>
</feature>
<feature type="turn" evidence="29">
    <location>
        <begin position="1565"/>
        <end position="1567"/>
    </location>
</feature>
<feature type="helix" evidence="29">
    <location>
        <begin position="1571"/>
        <end position="1573"/>
    </location>
</feature>
<feature type="strand" evidence="29">
    <location>
        <begin position="1574"/>
        <end position="1578"/>
    </location>
</feature>
<feature type="helix" evidence="29">
    <location>
        <begin position="1583"/>
        <end position="1592"/>
    </location>
</feature>
<feature type="strand" evidence="29">
    <location>
        <begin position="1600"/>
        <end position="1602"/>
    </location>
</feature>
<feature type="strand" evidence="29">
    <location>
        <begin position="1605"/>
        <end position="1608"/>
    </location>
</feature>
<feature type="turn" evidence="29">
    <location>
        <begin position="1610"/>
        <end position="1612"/>
    </location>
</feature>
<feature type="strand" evidence="29">
    <location>
        <begin position="1614"/>
        <end position="1618"/>
    </location>
</feature>
<feature type="strand" evidence="29">
    <location>
        <begin position="1644"/>
        <end position="1647"/>
    </location>
</feature>
<feature type="helix" evidence="29">
    <location>
        <begin position="1652"/>
        <end position="1664"/>
    </location>
</feature>
<feature type="strand" evidence="29">
    <location>
        <begin position="1670"/>
        <end position="1675"/>
    </location>
</feature>
<feature type="helix" evidence="29">
    <location>
        <begin position="1676"/>
        <end position="1680"/>
    </location>
</feature>
<feature type="strand" evidence="29">
    <location>
        <begin position="1689"/>
        <end position="1693"/>
    </location>
</feature>
<feature type="turn" evidence="29">
    <location>
        <begin position="1695"/>
        <end position="1697"/>
    </location>
</feature>
<feature type="helix" evidence="29">
    <location>
        <begin position="1701"/>
        <end position="1703"/>
    </location>
</feature>
<feature type="helix" evidence="29">
    <location>
        <begin position="1705"/>
        <end position="1707"/>
    </location>
</feature>
<feature type="helix" evidence="29">
    <location>
        <begin position="1709"/>
        <end position="1719"/>
    </location>
</feature>
<feature type="strand" evidence="29">
    <location>
        <begin position="1720"/>
        <end position="1729"/>
    </location>
</feature>
<feature type="turn" evidence="29">
    <location>
        <begin position="1730"/>
        <end position="1733"/>
    </location>
</feature>
<feature type="helix" evidence="29">
    <location>
        <begin position="1735"/>
        <end position="1750"/>
    </location>
</feature>
<feature type="strand" evidence="29">
    <location>
        <begin position="1754"/>
        <end position="1762"/>
    </location>
</feature>
<feature type="helix" evidence="29">
    <location>
        <begin position="1775"/>
        <end position="1784"/>
    </location>
</feature>
<feature type="strand" evidence="29">
    <location>
        <begin position="1797"/>
        <end position="1801"/>
    </location>
</feature>
<feature type="strand" evidence="29">
    <location>
        <begin position="1804"/>
        <end position="1811"/>
    </location>
</feature>
<feature type="helix" evidence="29">
    <location>
        <begin position="1814"/>
        <end position="1822"/>
    </location>
</feature>
<feature type="strand" evidence="29">
    <location>
        <begin position="1828"/>
        <end position="1832"/>
    </location>
</feature>
<feature type="turn" evidence="29">
    <location>
        <begin position="1833"/>
        <end position="1835"/>
    </location>
</feature>
<feature type="strand" evidence="29">
    <location>
        <begin position="1838"/>
        <end position="1842"/>
    </location>
</feature>
<feature type="strand" evidence="29">
    <location>
        <begin position="1849"/>
        <end position="1853"/>
    </location>
</feature>
<feature type="turn" evidence="29">
    <location>
        <begin position="1863"/>
        <end position="1867"/>
    </location>
</feature>
<feature type="strand" evidence="29">
    <location>
        <begin position="1869"/>
        <end position="1876"/>
    </location>
</feature>
<feature type="strand" evidence="29">
    <location>
        <begin position="1878"/>
        <end position="1883"/>
    </location>
</feature>
<feature type="turn" evidence="29">
    <location>
        <begin position="1884"/>
        <end position="1886"/>
    </location>
</feature>
<feature type="strand" evidence="29">
    <location>
        <begin position="1887"/>
        <end position="1898"/>
    </location>
</feature>
<feature type="strand" evidence="29">
    <location>
        <begin position="1901"/>
        <end position="1911"/>
    </location>
</feature>
<feature type="strand" evidence="29">
    <location>
        <begin position="1913"/>
        <end position="1918"/>
    </location>
</feature>
<feature type="helix" evidence="29">
    <location>
        <begin position="1920"/>
        <end position="1922"/>
    </location>
</feature>
<feature type="helix" evidence="29">
    <location>
        <begin position="1935"/>
        <end position="1953"/>
    </location>
</feature>
<feature type="strand" evidence="29">
    <location>
        <begin position="1963"/>
        <end position="1969"/>
    </location>
</feature>
<feature type="helix" evidence="29">
    <location>
        <begin position="1972"/>
        <end position="1985"/>
    </location>
</feature>
<feature type="strand" evidence="29">
    <location>
        <begin position="1988"/>
        <end position="1993"/>
    </location>
</feature>
<feature type="helix" evidence="29">
    <location>
        <begin position="2018"/>
        <end position="2024"/>
    </location>
</feature>
<feature type="strand" evidence="29">
    <location>
        <begin position="2031"/>
        <end position="2034"/>
    </location>
</feature>
<feature type="helix" evidence="29">
    <location>
        <begin position="2041"/>
        <end position="2051"/>
    </location>
</feature>
<feature type="strand" evidence="29">
    <location>
        <begin position="2057"/>
        <end position="2059"/>
    </location>
</feature>
<feature type="helix" evidence="29">
    <location>
        <begin position="2061"/>
        <end position="2064"/>
    </location>
</feature>
<feature type="strand" evidence="29">
    <location>
        <begin position="2065"/>
        <end position="2067"/>
    </location>
</feature>
<feature type="helix" evidence="29">
    <location>
        <begin position="2085"/>
        <end position="2095"/>
    </location>
</feature>
<feature type="turn" evidence="29">
    <location>
        <begin position="2096"/>
        <end position="2098"/>
    </location>
</feature>
<feature type="helix" evidence="29">
    <location>
        <begin position="2099"/>
        <end position="2101"/>
    </location>
</feature>
<feature type="strand" evidence="29">
    <location>
        <begin position="2106"/>
        <end position="2110"/>
    </location>
</feature>
<feature type="helix" evidence="29">
    <location>
        <begin position="2111"/>
        <end position="2117"/>
    </location>
</feature>
<feature type="strand" evidence="29">
    <location>
        <begin position="2120"/>
        <end position="2122"/>
    </location>
</feature>
<feature type="strand" evidence="29">
    <location>
        <begin position="2128"/>
        <end position="2130"/>
    </location>
</feature>
<feature type="helix" evidence="29">
    <location>
        <begin position="2135"/>
        <end position="2138"/>
    </location>
</feature>
<feature type="strand" evidence="29">
    <location>
        <begin position="2139"/>
        <end position="2143"/>
    </location>
</feature>
<feature type="strand" evidence="29">
    <location>
        <begin position="2157"/>
        <end position="2162"/>
    </location>
</feature>
<feature type="helix" evidence="29">
    <location>
        <begin position="2167"/>
        <end position="2178"/>
    </location>
</feature>
<feature type="strand" evidence="29">
    <location>
        <begin position="2183"/>
        <end position="2187"/>
    </location>
</feature>
<feature type="helix" evidence="29">
    <location>
        <begin position="2195"/>
        <end position="2203"/>
    </location>
</feature>
<feature type="strand" evidence="29">
    <location>
        <begin position="2207"/>
        <end position="2210"/>
    </location>
</feature>
<feature type="helix" evidence="29">
    <location>
        <begin position="2218"/>
        <end position="2230"/>
    </location>
</feature>
<feature type="strand" evidence="29">
    <location>
        <begin position="2236"/>
        <end position="2241"/>
    </location>
</feature>
<feature type="turn" evidence="29">
    <location>
        <begin position="2251"/>
        <end position="2253"/>
    </location>
</feature>
<feature type="helix" evidence="29">
    <location>
        <begin position="2256"/>
        <end position="2276"/>
    </location>
</feature>
<feature type="strand" evidence="29">
    <location>
        <begin position="2282"/>
        <end position="2284"/>
    </location>
</feature>
<feature type="strand" evidence="29">
    <location>
        <begin position="2287"/>
        <end position="2294"/>
    </location>
</feature>
<feature type="helix" evidence="29">
    <location>
        <begin position="2296"/>
        <end position="2299"/>
    </location>
</feature>
<feature type="helix" evidence="29">
    <location>
        <begin position="2305"/>
        <end position="2323"/>
    </location>
</feature>
<feature type="strand" evidence="29">
    <location>
        <begin position="2329"/>
        <end position="2333"/>
    </location>
</feature>
<feature type="strand" evidence="29">
    <location>
        <begin position="2335"/>
        <end position="2340"/>
    </location>
</feature>
<feature type="helix" evidence="29">
    <location>
        <begin position="2341"/>
        <end position="2344"/>
    </location>
</feature>
<feature type="helix" evidence="29">
    <location>
        <begin position="2348"/>
        <end position="2353"/>
    </location>
</feature>
<feature type="turn" evidence="29">
    <location>
        <begin position="2354"/>
        <end position="2357"/>
    </location>
</feature>
<feature type="helix" evidence="29">
    <location>
        <begin position="2363"/>
        <end position="2385"/>
    </location>
</feature>
<feature type="helix" evidence="29">
    <location>
        <begin position="2393"/>
        <end position="2395"/>
    </location>
</feature>
<feature type="turn" evidence="29">
    <location>
        <begin position="2397"/>
        <end position="2399"/>
    </location>
</feature>
<feature type="strand" evidence="29">
    <location>
        <begin position="2400"/>
        <end position="2402"/>
    </location>
</feature>
<feature type="helix" evidence="29">
    <location>
        <begin position="2410"/>
        <end position="2412"/>
    </location>
</feature>
<feature type="turn" evidence="29">
    <location>
        <begin position="2413"/>
        <end position="2415"/>
    </location>
</feature>
<feature type="turn" evidence="29">
    <location>
        <begin position="2417"/>
        <end position="2420"/>
    </location>
</feature>
<feature type="helix" evidence="29">
    <location>
        <begin position="2422"/>
        <end position="2427"/>
    </location>
</feature>
<evidence type="ECO:0000255" key="1"/>
<evidence type="ECO:0000255" key="2">
    <source>
        <dbReference type="PROSITE-ProRule" id="PRU00258"/>
    </source>
</evidence>
<evidence type="ECO:0000255" key="3">
    <source>
        <dbReference type="PROSITE-ProRule" id="PRU01348"/>
    </source>
</evidence>
<evidence type="ECO:0000255" key="4">
    <source>
        <dbReference type="PROSITE-ProRule" id="PRU01363"/>
    </source>
</evidence>
<evidence type="ECO:0000255" key="5">
    <source>
        <dbReference type="PROSITE-ProRule" id="PRU10022"/>
    </source>
</evidence>
<evidence type="ECO:0000256" key="6">
    <source>
        <dbReference type="SAM" id="MobiDB-lite"/>
    </source>
</evidence>
<evidence type="ECO:0000269" key="7">
    <source>
    </source>
</evidence>
<evidence type="ECO:0000269" key="8">
    <source>
    </source>
</evidence>
<evidence type="ECO:0000269" key="9">
    <source>
    </source>
</evidence>
<evidence type="ECO:0000269" key="10">
    <source>
    </source>
</evidence>
<evidence type="ECO:0000269" key="11">
    <source>
    </source>
</evidence>
<evidence type="ECO:0000269" key="12">
    <source>
    </source>
</evidence>
<evidence type="ECO:0000269" key="13">
    <source>
    </source>
</evidence>
<evidence type="ECO:0000269" key="14">
    <source>
    </source>
</evidence>
<evidence type="ECO:0000269" key="15">
    <source>
    </source>
</evidence>
<evidence type="ECO:0000269" key="16">
    <source>
    </source>
</evidence>
<evidence type="ECO:0000269" key="17">
    <source>
    </source>
</evidence>
<evidence type="ECO:0000269" key="18">
    <source>
    </source>
</evidence>
<evidence type="ECO:0000269" key="19">
    <source>
    </source>
</evidence>
<evidence type="ECO:0000269" key="20">
    <source>
    </source>
</evidence>
<evidence type="ECO:0000269" key="21">
    <source>
    </source>
</evidence>
<evidence type="ECO:0000269" key="22">
    <source>
    </source>
</evidence>
<evidence type="ECO:0000269" key="23">
    <source>
    </source>
</evidence>
<evidence type="ECO:0000269" key="24">
    <source>
    </source>
</evidence>
<evidence type="ECO:0000269" key="25">
    <source>
    </source>
</evidence>
<evidence type="ECO:0000303" key="26">
    <source>
    </source>
</evidence>
<evidence type="ECO:0000305" key="27">
    <source>
    </source>
</evidence>
<evidence type="ECO:0000312" key="28">
    <source>
        <dbReference type="EMBL" id="AAD39830.1"/>
    </source>
</evidence>
<evidence type="ECO:0007829" key="29">
    <source>
        <dbReference type="PDB" id="7CPX"/>
    </source>
</evidence>
<name>LOVB_ASPTE</name>
<comment type="function">
    <text evidence="7 8 9 10 11 12 13 14 15 16 17 18 19 20 23 24">Lovastatin nonaketide synthase; part of the gene cluster that mediates the biosynthesis of lovastatin (also known as mevinolin, mevacor or monacolin K), a hypolipidemic inhibitor of (3S)-hydroxymethylglutaryl-coenzyme A (HMG-CoA) reductase (HMGR) (PubMed:10334994, PubMed:12929390, PubMed:21495633, PubMed:23023987, PubMed:39515266, PubMed:33558520). The first step in the biosynthesis of lovastatin is the production of dihydromonacolin L acid by the lovastatin nonaketide synthase lovB and the trans-acting enoyl reductase lovC (called the lovB-lovC megasynthase complex) via condensation of one acetyl-CoA unit and 8 malonyl-CoA units. The formation of the LovB/C complex is essential for the integrity of the catalytic chamber to the complete total synthesis of DML acid (PubMed:10334994, PubMed:10381407, PubMed:19900898, PubMed:22733743, PubMed:23023987, PubMed:33558520). Dihydromonacolin L acid is released from lovB by the thioesterase lovG (PubMed:23653178, PubMed:33558520). Next, dihydromonacolin L acid is oxidized by the dihydromonacolin L monooxygenase lovA twice to form monacolin J acid (PubMed:12929390, PubMed:21495633). The 2-methylbutyrate moiety of lovastatin is synthesized by the lovastatin diketide synthase lovF via condensation of one acetyl-CoA unit and one malonyl-CoA unit (PubMed:19530726, PubMed:21069965). Finally, the covalent attachment of this moiety to monacolin J acid is catalyzed by the transesterase lovD to yield lovastatin (PubMed:10334994, PubMed:17113998, PubMed:18988191, PubMed:19875080, PubMed:24727900). LovD has broad substrate specificity and can also convert monacolin J to simvastatin using alpha-dimethylbutanoyl-S-methyl-3-mercaptopropionate (DMB-S-MMP) as the thioester acyl donor, and can also catalyze the reverse reaction and function as hydrolase in vitro (PubMed:19875080). LovD has much higher activity with LovF-bound 2-methylbutanoate than with free diketide substrates (PubMed:21069965).</text>
</comment>
<comment type="catalytic activity">
    <reaction evidence="7 8 18 23">
        <text>holo-[lovastatin nonaketide synthase] + 9 malonyl-CoA + S-adenosyl-L-methionine + 11 NADPH + 19 H(+) = dihydromonacolin L-[lovastatin nonaketide synthase] + S-adenosyl-L-homocysteine + 9 CO2 + 11 NADP(+) + 9 CoA + 6 H2O</text>
        <dbReference type="Rhea" id="RHEA:18565"/>
        <dbReference type="Rhea" id="RHEA-COMP:10042"/>
        <dbReference type="Rhea" id="RHEA-COMP:10043"/>
        <dbReference type="ChEBI" id="CHEBI:15377"/>
        <dbReference type="ChEBI" id="CHEBI:15378"/>
        <dbReference type="ChEBI" id="CHEBI:16526"/>
        <dbReference type="ChEBI" id="CHEBI:57287"/>
        <dbReference type="ChEBI" id="CHEBI:57384"/>
        <dbReference type="ChEBI" id="CHEBI:57783"/>
        <dbReference type="ChEBI" id="CHEBI:57856"/>
        <dbReference type="ChEBI" id="CHEBI:58349"/>
        <dbReference type="ChEBI" id="CHEBI:59789"/>
        <dbReference type="ChEBI" id="CHEBI:64479"/>
        <dbReference type="ChEBI" id="CHEBI:79032"/>
        <dbReference type="EC" id="2.3.1.161"/>
    </reaction>
    <physiologicalReaction direction="left-to-right" evidence="7 8 18 23">
        <dbReference type="Rhea" id="RHEA:18566"/>
    </physiologicalReaction>
</comment>
<comment type="cofactor">
    <cofactor evidence="14">
        <name>pantetheine 4'-phosphate</name>
        <dbReference type="ChEBI" id="CHEBI:47942"/>
    </cofactor>
    <text evidence="14">Binds 1 phosphopantetheine covalently.</text>
</comment>
<comment type="pathway">
    <text evidence="7 8 14 24">Polyketide biosynthesis; lovastatin biosynthesis.</text>
</comment>
<comment type="subunit">
    <text evidence="17 23">Homodimer (PubMed:33558520). Each MAT domain from the lovB homodimer binds one lovC molecule to form the final active lovB-lovC megasynthase complex (PubMed:22733743, PubMed:33558520).</text>
</comment>
<comment type="domain">
    <text evidence="17 18 23">Multidomain protein; including a ketosynthase (KS) that catalyzes repeated decarboxylative condensation to elongate the polyketide backbone; a malonyl-CoA:ACP transacylase (MAT) that selects and transfers the extender unit malonyl-CoA; a dehydratase (DH) domain that reduces hydroxyl groups to enoyl groups; a methyltransferase (CMeT) domain responsible for the incorporation of methyl groups; a ketoreductase (KR) domain that catalyzes beta-ketoreduction steps; and an acyl-carrier protein (ACP) that serves as the tether of the growing and completed polyketide via its phosphopantetheinyl arm (PubMed:22733743). A C-terminal thioesterase (TE) domain that is often found in polyketide synthase proteins is not present in this protein, but lovB contains insteado a C-terminal condensation (C) domain that has lost its condensation activity, but has gained a novel function that is necessary for release of the final product (PubMed:23023987).</text>
</comment>
<comment type="domain">
    <text evidence="17 23">Lacks an enoylreductase (ER) domain that reduces enoyl groups to alkyl group which function is performed by the trans-acting enoyl reductase lovC via its binding to the MAT domain of lovB.</text>
</comment>
<comment type="biotechnology">
    <text evidence="21 22 25">Lovastatin acts as a hypolipidemic agent that works as inhibitor of (3S)-hydroxymethylglutaryl-coenzyme A (HMG-CoA) reductase (HMGR) which reduces HMG-CoA to mevalonate and is the key step in cholesterol biosynthesis (PubMed:6933445). Lovastatin, simvastatin and related compounds are widely used to treat hypercholesteremia and reduce the risk of cardiovascular disease (PubMed:6933445). Furthermore, statins such as lovastatin were found to be anticancer agents (PubMed:29236027, PubMed:29932104).</text>
</comment>
<accession>Q9Y8A5</accession>
<sequence>MAQSMYPNEPIVVVGSGCRFPGDANTPSKLWELLQHPRDVQSRIPKERFDVDTFYHPDGKHHGRTNAPYAYVLQDDLGAFDAAFFNIQAGEAESMDPQHRLLLETVYEAVTNAGMRIQDLQGTSTAVYVGVMTHDYETVSTRDLESIPTYSATGVAVSVASNRISYFFDWHGPSMTIDTACSSSLVAVHLAVQQLRTGQSSMAIAAGANLILGPMTFVLESKLSMLSPSGRSRMWDAGADGYARGEAVCSVVLKTLSQALRDGDTIECVIRETGVNQDGRTTGITMPNHSAQEALIKATYAQAGLDITKAEDRCQFFEAHGTGTPAGDPQEAEAIATAFFGHEQVARSDGNERAPLFVGSAKTVVGHTEGTAGLAGLMKASFAVRHGVIPPNLLFDKISPRVAPFYKNLRIPTEATQWPALPPGQPRRASVNSFGFGGTNAHAIIEEYMEPEQNQLRVSNNEDCPPMTGVLSLPLVLSAKSQRSLKIMMEEMLQFLQSHPEIHLHDLTWSLLRKRSVLPFRRAIVGHSHETIRRALEDAIEDGIVSSDFTTEVRGQPSVLGIFTGQGAQWPGMLKNLIEASPYVRNIVRELDDSLQSLPEKYRPSWTLLDQFMLEGEASNVQYATFSQPLCCAVQIVLVRLLEAARIRFTAVVGHSSGEIACAFAAGLISASLAIRIAYLRGVVSAGGARGTPGAMLAAGMSFEEAQEICELDAFEGRICVAASNSPDSVTFSGDANAIDHLKGMLEDESTFARLLKVDTAYHSHHMLPCADPYMQALEECGCAVADAGSPAGSVPWYSSVDAENRQMAARDVTAKYWKDNLVSPVLFSHAVQRAVVTHKALDIGIEVGCHPALKSPCVATIKDVLSGVDLAYTGCLERGKNDLDSFSRALAYLWERFGASSFDADEFMRAVAPDRPCMSVSKLLPAYPWDRSRRYWVESRATRHHLRGPKPHLLLGKLSEYSTPLSFQWLNFVRPRDIEWLDGHALQGQTVFPAAGYIVMAMEAALMIAGTHAKQVKLLEILDMSIDKAVIFDDEDSLVELNLTADVSRNAGEAGSMTISFKIDSCLSKEGNLSLSAKGQLALTIEDVNPRTTSASDQHHLPPPEEEHPHMNRVNINAFYHELGLMGYNYSKDFRRLHNMQRADLRASGTLDFIPLMDEGNGCPLLLHPASLDVAFQTVIGAYSSPGDRRLRCLYVPTHVDRITLVPSLCLATAESGCEKVAFNTINTYDKGDYLSGDIVVFDAEQTTLFQVENITFKPFSPPDASTDHAMFARWSWGPLTPDSLLDNPEYWATAQDKEAIPIIERIVYFYIRSFLSQLTLEERQQAAFHLQKQIEWLEQVLASAKEGRHLWYDPGWENDTEAQIEHLCTANSYHPHVRLVQRVGQHLLPTVRSNGNPFDLLDHDGLLTEFYTNTLSFGPALHYARELVAQIAHRYQSMDILEIGAGTGGATKYVLATPQLGFNSYTYTDISTGFFEQAREQFAPFEDRMVFEPLDIRRSPAEQGFEPHAYDLIIASNVLHATPDLEKTMAHARSLLKPGGQMVILEITHKEHTRLGFIFGLFADWWAGVDDGRCTEPFVSFDRWDAILKRVGFSGVDSRTTDRDANLFPTSVFSTHAIDATVEYLDAPLASSGTVKDSYPPLVVVGGQTPQSQRLLNDIKAIMPPRPLQTYKRLVDLLDAEELPMKSTFVMLTELDEELFAGLTEETFEATKLLLTYASNTVWLTENAWVQHPHQASTIGMLRSIRREHPDLGVHVLDVDAVETFDATFLVEQVLRLEEHTDELASSTTWTQEPEVSWCKGRPWIPRLKRDLARNNRMNSSRRPIYEMIDSSRAPVALQTARDSSSYFLESAETWFVPESVQQMETKTIYVHFSCPHALRVGQLGFFYLVQGHVQEGNREVPVVALAERNASIVHVRPDYIYTEADNNLSEGGGSLMVTVLAAAVLAETVISTAKCLGVTDSILVLNPPSICGQMLLHAGEEIGLQVHLATTSGNRSSVSAGDAKSWLTLHARDTDWHLRRVLPRGVQALVDLSADQSCEGLTQRMMKVLMPGCAHYRAADLFTDTVSTELHSGSRHQASLPAAYWEHVVSLARQGLPSVSEGWEVMPCTQFAAHADKTRPDLSTVISWPRESDEATLPTRVRSIDAETLFAADKTYLLVGLTGDLGRSLGRWMVQHGACHIVLTSRNPQVNPKWLAHVEELGGRVTVLSMDVTSQNSVEAGLAKLKDLHLPPVGGIAFGPLVLQDVMLNNMELPMMEMVLNPKVEGVRILHEKFSDPTSSNPLDFFVMFSSIVAVMGNPGQANYSAANCYLQALAQQRVASGLAASTIDIGAVYGVGFVTRAELEEDFNAIRFMFDSVEEHELHTLFAEAVVAGRRAVHQQEQQRKFATVLDMADLELTTGIPPLDPALKDRITFFDDPRIGNLKIPEYRGAKAGEGAAGSKGSVKEQLLQATNLDQVRQIVIDGLSAKLQVTLQIPDGESVHPTIPLIDQGVDSLGAVTVGTWFSKQLYLDLPLLKVLGGASITDLANEAAARLPPSSIPLVAATDGGAESTDNTSENEVSGREDTDLSAAATITEPSSADEDDTEPGDEDVPRSHHPLSLGQEYSWRIQQGAEDPTVFNNTIGMFMKGSIDLKRLYKALRAVLRRHEIFRTGFANVDENGMAQLVFGQTKNKVQTIQVSDRAGAEEGYRQLVQTRYNPAAGDTLRLVDFFWGQDDHLLVVAYHRLVGDGSTTENIFVEAGQLYDGTSLSPHVPQFADLAARQRAMLEDGRMEEDLAYWKKMHYRPSSIPVLPLMRPLVGNSSRSDTPNFQHCGPWQQHEAVARLDPMVAFRIKERSRKHKATPMQFYLAAYQVLLARLTDSTDLTVGLADTNRATVDEMAAMGFFANLLPLRFRDFRPHITFGEHLIATRDLVREALQHARVPYGVLLDQLGLEVPVPTSNQPAPLFQAVFDYKQGQAESGTIGGAKITEVIATRERTPYDVVLEMSDDPTKDPLLTAKLQSSRYEAHHPQAFLESYMSLLSMFSMNPALKLA</sequence>
<gene>
    <name evidence="28" type="primary">lovB</name>
</gene>
<protein>
    <recommendedName>
        <fullName>Lovastatin nonaketide synthase, polyketide synthase component</fullName>
        <shortName>LNKS</shortName>
        <ecNumber evidence="7 8 23">2.3.1.161</ecNumber>
    </recommendedName>
    <alternativeName>
        <fullName evidence="26">Lovastatin biosynthesis cluster protein B</fullName>
    </alternativeName>
</protein>